<evidence type="ECO:0000250" key="1">
    <source>
        <dbReference type="UniProtKB" id="A4D263"/>
    </source>
</evidence>
<evidence type="ECO:0000269" key="2">
    <source>
    </source>
</evidence>
<evidence type="ECO:0000269" key="3">
    <source>
    </source>
</evidence>
<evidence type="ECO:0000303" key="4">
    <source>
    </source>
</evidence>
<evidence type="ECO:0000303" key="5">
    <source>
    </source>
</evidence>
<evidence type="ECO:0000303" key="6">
    <source>
    </source>
</evidence>
<evidence type="ECO:0000305" key="7"/>
<dbReference type="EMBL" id="AK015144">
    <property type="protein sequence ID" value="BAB29723.1"/>
    <property type="molecule type" value="mRNA"/>
</dbReference>
<dbReference type="EMBL" id="AL662805">
    <property type="status" value="NOT_ANNOTATED_CDS"/>
    <property type="molecule type" value="Genomic_DNA"/>
</dbReference>
<dbReference type="CCDS" id="CCDS48752.1">
    <molecule id="Q5NC83-2"/>
</dbReference>
<dbReference type="RefSeq" id="NP_082945.1">
    <molecule id="Q5NC83-2"/>
    <property type="nucleotide sequence ID" value="NM_028669.2"/>
</dbReference>
<dbReference type="SMR" id="Q5NC83"/>
<dbReference type="FunCoup" id="Q5NC83">
    <property type="interactions" value="1"/>
</dbReference>
<dbReference type="STRING" id="10090.ENSMUSP00000105300"/>
<dbReference type="iPTMnet" id="Q5NC83"/>
<dbReference type="PhosphoSitePlus" id="Q5NC83"/>
<dbReference type="jPOST" id="Q5NC83"/>
<dbReference type="PaxDb" id="10090-ENSMUSP00000105300"/>
<dbReference type="ProteomicsDB" id="254546">
    <molecule id="Q5NC83-1"/>
</dbReference>
<dbReference type="ProteomicsDB" id="254547">
    <molecule id="Q5NC83-2"/>
</dbReference>
<dbReference type="Antibodypedia" id="7345">
    <property type="antibodies" value="56 antibodies from 10 providers"/>
</dbReference>
<dbReference type="Ensembl" id="ENSMUST00000109678.3">
    <molecule id="Q5NC83-2"/>
    <property type="protein sequence ID" value="ENSMUSP00000105300.2"/>
    <property type="gene ID" value="ENSMUSG00000020191.12"/>
</dbReference>
<dbReference type="GeneID" id="73862"/>
<dbReference type="KEGG" id="mmu:73862"/>
<dbReference type="UCSC" id="uc007iaf.1">
    <molecule id="Q5NC83-2"/>
    <property type="organism name" value="mouse"/>
</dbReference>
<dbReference type="AGR" id="MGI:1921112"/>
<dbReference type="CTD" id="100130988"/>
<dbReference type="MGI" id="MGI:1921112">
    <property type="gene designation" value="Spmip7"/>
</dbReference>
<dbReference type="VEuPathDB" id="HostDB:ENSMUSG00000020191"/>
<dbReference type="eggNOG" id="ENOG502RYZE">
    <property type="taxonomic scope" value="Eukaryota"/>
</dbReference>
<dbReference type="GeneTree" id="ENSGT00940000162844"/>
<dbReference type="HOGENOM" id="CLU_146801_0_0_1"/>
<dbReference type="InParanoid" id="Q5NC83"/>
<dbReference type="OMA" id="NRRWNSR"/>
<dbReference type="OrthoDB" id="5983862at2759"/>
<dbReference type="PhylomeDB" id="Q5NC83"/>
<dbReference type="TreeFam" id="TF337635"/>
<dbReference type="BioGRID-ORCS" id="73862">
    <property type="hits" value="1 hit in 76 CRISPR screens"/>
</dbReference>
<dbReference type="ChiTaRS" id="Pms1">
    <property type="organism name" value="mouse"/>
</dbReference>
<dbReference type="PRO" id="PR:Q5NC83"/>
<dbReference type="Proteomes" id="UP000000589">
    <property type="component" value="Chromosome 11"/>
</dbReference>
<dbReference type="RNAct" id="Q5NC83">
    <property type="molecule type" value="protein"/>
</dbReference>
<dbReference type="Bgee" id="ENSMUSG00000020191">
    <property type="expression patterns" value="Expressed in seminiferous tubule of testis and 44 other cell types or tissues"/>
</dbReference>
<dbReference type="ExpressionAtlas" id="Q5NC83">
    <property type="expression patterns" value="baseline and differential"/>
</dbReference>
<dbReference type="GO" id="GO:0030154">
    <property type="term" value="P:cell differentiation"/>
    <property type="evidence" value="ECO:0007669"/>
    <property type="project" value="UniProtKB-KW"/>
</dbReference>
<dbReference type="GO" id="GO:0007283">
    <property type="term" value="P:spermatogenesis"/>
    <property type="evidence" value="ECO:0000315"/>
    <property type="project" value="UniProtKB"/>
</dbReference>
<dbReference type="InterPro" id="IPR027867">
    <property type="entry name" value="SPATA48"/>
</dbReference>
<dbReference type="PANTHER" id="PTHR34759">
    <property type="entry name" value="SPERMATOGENESIS-ASSOCIATED PROTEIN 48"/>
    <property type="match status" value="1"/>
</dbReference>
<dbReference type="PANTHER" id="PTHR34759:SF1">
    <property type="entry name" value="SPERMATOGENESIS-ASSOCIATED PROTEIN 48"/>
    <property type="match status" value="1"/>
</dbReference>
<dbReference type="Pfam" id="PF15073">
    <property type="entry name" value="SPATA48"/>
    <property type="match status" value="1"/>
</dbReference>
<organism>
    <name type="scientific">Mus musculus</name>
    <name type="common">Mouse</name>
    <dbReference type="NCBI Taxonomy" id="10090"/>
    <lineage>
        <taxon>Eukaryota</taxon>
        <taxon>Metazoa</taxon>
        <taxon>Chordata</taxon>
        <taxon>Craniata</taxon>
        <taxon>Vertebrata</taxon>
        <taxon>Euteleostomi</taxon>
        <taxon>Mammalia</taxon>
        <taxon>Eutheria</taxon>
        <taxon>Euarchontoglires</taxon>
        <taxon>Glires</taxon>
        <taxon>Rodentia</taxon>
        <taxon>Myomorpha</taxon>
        <taxon>Muroidea</taxon>
        <taxon>Muridae</taxon>
        <taxon>Murinae</taxon>
        <taxon>Mus</taxon>
        <taxon>Mus</taxon>
    </lineage>
</organism>
<protein>
    <recommendedName>
        <fullName evidence="7">Protein SPMIP7</fullName>
    </recommendedName>
    <alternativeName>
        <fullName evidence="5">Post-meiotic spermatogenesis protein 1</fullName>
    </alternativeName>
    <alternativeName>
        <fullName evidence="1">Sperm microtubule inner protein 7</fullName>
    </alternativeName>
    <alternativeName>
        <fullName evidence="6">Spermatogenesis-associated protein 48</fullName>
    </alternativeName>
</protein>
<accession>Q5NC83</accession>
<accession>Q9D5M8</accession>
<comment type="function">
    <text evidence="3">Essential for normal spermatogenesis.</text>
</comment>
<comment type="alternative products">
    <event type="alternative splicing"/>
    <isoform>
        <id>Q5NC83-1</id>
        <name>1</name>
        <sequence type="displayed"/>
    </isoform>
    <isoform>
        <id>Q5NC83-2</id>
        <name>2</name>
        <sequence type="described" ref="VSP_033234"/>
    </isoform>
</comment>
<comment type="tissue specificity">
    <text evidence="2 3">Testis specific. Expressed at the spermatid stage.</text>
</comment>
<comment type="developmental stage">
    <text evidence="2 3">Undetectable until 20 days post partum (dpp), and becomes detectable only after 22-30 dpp (PubMed:22110678). Expressed after postnatal day 15 and expression gradually increases with age (PubMed:29700843).</text>
</comment>
<comment type="disruption phenotype">
    <text evidence="3">Mice have smaller testis and show impaired spermatogenesis.</text>
</comment>
<name>SMIP7_MOUSE</name>
<sequence>MDMEVKTMPGKISIPRRFIFSEGKAIEHPDYPHYSNLLQKMNMPSVKGLEDRHNCVRFEKKCNPTFLKFHPYPPSVLPDYHLHYPYPPPYGRAYPLAPLRDDVPLGDPCSGFMSPGGDANLKPNIGRAIPNLVSFHDVKPQNRVPRPDKGFQTTIKRQTILAEELKQDRRWNSRKVPDISIKAKLGGWTSPMKVVPVPVHEHEVGTLSRIYTFDEEAISTDDSEPLVQLDKKYNIKDSFYKSSTQKAYEDVPWDKMLPPKLDPEETTVEKAADHISQCFSLKRYERLPAITQMVGGLWDRFQTRLFSAPAKPINFVSPSTRSKYIPLYTGHVQSTDADNVDNPYGDIKSVASPRHSKLQYTNSSRSANIPGYTGKVHFTATHPTNSNIPSREPSADSEMNRLLLQEMRVDRFRHQGPMSQMVTTVKPYNPFNKKEKETLEY</sequence>
<keyword id="KW-0025">Alternative splicing</keyword>
<keyword id="KW-0221">Differentiation</keyword>
<keyword id="KW-1185">Reference proteome</keyword>
<keyword id="KW-0744">Spermatogenesis</keyword>
<reference key="1">
    <citation type="journal article" date="2005" name="Science">
        <title>The transcriptional landscape of the mammalian genome.</title>
        <authorList>
            <person name="Carninci P."/>
            <person name="Kasukawa T."/>
            <person name="Katayama S."/>
            <person name="Gough J."/>
            <person name="Frith M.C."/>
            <person name="Maeda N."/>
            <person name="Oyama R."/>
            <person name="Ravasi T."/>
            <person name="Lenhard B."/>
            <person name="Wells C."/>
            <person name="Kodzius R."/>
            <person name="Shimokawa K."/>
            <person name="Bajic V.B."/>
            <person name="Brenner S.E."/>
            <person name="Batalov S."/>
            <person name="Forrest A.R."/>
            <person name="Zavolan M."/>
            <person name="Davis M.J."/>
            <person name="Wilming L.G."/>
            <person name="Aidinis V."/>
            <person name="Allen J.E."/>
            <person name="Ambesi-Impiombato A."/>
            <person name="Apweiler R."/>
            <person name="Aturaliya R.N."/>
            <person name="Bailey T.L."/>
            <person name="Bansal M."/>
            <person name="Baxter L."/>
            <person name="Beisel K.W."/>
            <person name="Bersano T."/>
            <person name="Bono H."/>
            <person name="Chalk A.M."/>
            <person name="Chiu K.P."/>
            <person name="Choudhary V."/>
            <person name="Christoffels A."/>
            <person name="Clutterbuck D.R."/>
            <person name="Crowe M.L."/>
            <person name="Dalla E."/>
            <person name="Dalrymple B.P."/>
            <person name="de Bono B."/>
            <person name="Della Gatta G."/>
            <person name="di Bernardo D."/>
            <person name="Down T."/>
            <person name="Engstrom P."/>
            <person name="Fagiolini M."/>
            <person name="Faulkner G."/>
            <person name="Fletcher C.F."/>
            <person name="Fukushima T."/>
            <person name="Furuno M."/>
            <person name="Futaki S."/>
            <person name="Gariboldi M."/>
            <person name="Georgii-Hemming P."/>
            <person name="Gingeras T.R."/>
            <person name="Gojobori T."/>
            <person name="Green R.E."/>
            <person name="Gustincich S."/>
            <person name="Harbers M."/>
            <person name="Hayashi Y."/>
            <person name="Hensch T.K."/>
            <person name="Hirokawa N."/>
            <person name="Hill D."/>
            <person name="Huminiecki L."/>
            <person name="Iacono M."/>
            <person name="Ikeo K."/>
            <person name="Iwama A."/>
            <person name="Ishikawa T."/>
            <person name="Jakt M."/>
            <person name="Kanapin A."/>
            <person name="Katoh M."/>
            <person name="Kawasawa Y."/>
            <person name="Kelso J."/>
            <person name="Kitamura H."/>
            <person name="Kitano H."/>
            <person name="Kollias G."/>
            <person name="Krishnan S.P."/>
            <person name="Kruger A."/>
            <person name="Kummerfeld S.K."/>
            <person name="Kurochkin I.V."/>
            <person name="Lareau L.F."/>
            <person name="Lazarevic D."/>
            <person name="Lipovich L."/>
            <person name="Liu J."/>
            <person name="Liuni S."/>
            <person name="McWilliam S."/>
            <person name="Madan Babu M."/>
            <person name="Madera M."/>
            <person name="Marchionni L."/>
            <person name="Matsuda H."/>
            <person name="Matsuzawa S."/>
            <person name="Miki H."/>
            <person name="Mignone F."/>
            <person name="Miyake S."/>
            <person name="Morris K."/>
            <person name="Mottagui-Tabar S."/>
            <person name="Mulder N."/>
            <person name="Nakano N."/>
            <person name="Nakauchi H."/>
            <person name="Ng P."/>
            <person name="Nilsson R."/>
            <person name="Nishiguchi S."/>
            <person name="Nishikawa S."/>
            <person name="Nori F."/>
            <person name="Ohara O."/>
            <person name="Okazaki Y."/>
            <person name="Orlando V."/>
            <person name="Pang K.C."/>
            <person name="Pavan W.J."/>
            <person name="Pavesi G."/>
            <person name="Pesole G."/>
            <person name="Petrovsky N."/>
            <person name="Piazza S."/>
            <person name="Reed J."/>
            <person name="Reid J.F."/>
            <person name="Ring B.Z."/>
            <person name="Ringwald M."/>
            <person name="Rost B."/>
            <person name="Ruan Y."/>
            <person name="Salzberg S.L."/>
            <person name="Sandelin A."/>
            <person name="Schneider C."/>
            <person name="Schoenbach C."/>
            <person name="Sekiguchi K."/>
            <person name="Semple C.A."/>
            <person name="Seno S."/>
            <person name="Sessa L."/>
            <person name="Sheng Y."/>
            <person name="Shibata Y."/>
            <person name="Shimada H."/>
            <person name="Shimada K."/>
            <person name="Silva D."/>
            <person name="Sinclair B."/>
            <person name="Sperling S."/>
            <person name="Stupka E."/>
            <person name="Sugiura K."/>
            <person name="Sultana R."/>
            <person name="Takenaka Y."/>
            <person name="Taki K."/>
            <person name="Tammoja K."/>
            <person name="Tan S.L."/>
            <person name="Tang S."/>
            <person name="Taylor M.S."/>
            <person name="Tegner J."/>
            <person name="Teichmann S.A."/>
            <person name="Ueda H.R."/>
            <person name="van Nimwegen E."/>
            <person name="Verardo R."/>
            <person name="Wei C.L."/>
            <person name="Yagi K."/>
            <person name="Yamanishi H."/>
            <person name="Zabarovsky E."/>
            <person name="Zhu S."/>
            <person name="Zimmer A."/>
            <person name="Hide W."/>
            <person name="Bult C."/>
            <person name="Grimmond S.M."/>
            <person name="Teasdale R.D."/>
            <person name="Liu E.T."/>
            <person name="Brusic V."/>
            <person name="Quackenbush J."/>
            <person name="Wahlestedt C."/>
            <person name="Mattick J.S."/>
            <person name="Hume D.A."/>
            <person name="Kai C."/>
            <person name="Sasaki D."/>
            <person name="Tomaru Y."/>
            <person name="Fukuda S."/>
            <person name="Kanamori-Katayama M."/>
            <person name="Suzuki M."/>
            <person name="Aoki J."/>
            <person name="Arakawa T."/>
            <person name="Iida J."/>
            <person name="Imamura K."/>
            <person name="Itoh M."/>
            <person name="Kato T."/>
            <person name="Kawaji H."/>
            <person name="Kawagashira N."/>
            <person name="Kawashima T."/>
            <person name="Kojima M."/>
            <person name="Kondo S."/>
            <person name="Konno H."/>
            <person name="Nakano K."/>
            <person name="Ninomiya N."/>
            <person name="Nishio T."/>
            <person name="Okada M."/>
            <person name="Plessy C."/>
            <person name="Shibata K."/>
            <person name="Shiraki T."/>
            <person name="Suzuki S."/>
            <person name="Tagami M."/>
            <person name="Waki K."/>
            <person name="Watahiki A."/>
            <person name="Okamura-Oho Y."/>
            <person name="Suzuki H."/>
            <person name="Kawai J."/>
            <person name="Hayashizaki Y."/>
        </authorList>
    </citation>
    <scope>NUCLEOTIDE SEQUENCE [LARGE SCALE MRNA] (ISOFORM 2)</scope>
    <source>
        <strain>C57BL/6J</strain>
        <tissue>Testis</tissue>
    </source>
</reference>
<reference key="2">
    <citation type="journal article" date="2009" name="PLoS Biol.">
        <title>Lineage-specific biology revealed by a finished genome assembly of the mouse.</title>
        <authorList>
            <person name="Church D.M."/>
            <person name="Goodstadt L."/>
            <person name="Hillier L.W."/>
            <person name="Zody M.C."/>
            <person name="Goldstein S."/>
            <person name="She X."/>
            <person name="Bult C.J."/>
            <person name="Agarwala R."/>
            <person name="Cherry J.L."/>
            <person name="DiCuccio M."/>
            <person name="Hlavina W."/>
            <person name="Kapustin Y."/>
            <person name="Meric P."/>
            <person name="Maglott D."/>
            <person name="Birtle Z."/>
            <person name="Marques A.C."/>
            <person name="Graves T."/>
            <person name="Zhou S."/>
            <person name="Teague B."/>
            <person name="Potamousis K."/>
            <person name="Churas C."/>
            <person name="Place M."/>
            <person name="Herschleb J."/>
            <person name="Runnheim R."/>
            <person name="Forrest D."/>
            <person name="Amos-Landgraf J."/>
            <person name="Schwartz D.C."/>
            <person name="Cheng Z."/>
            <person name="Lindblad-Toh K."/>
            <person name="Eichler E.E."/>
            <person name="Ponting C.P."/>
        </authorList>
    </citation>
    <scope>NUCLEOTIDE SEQUENCE [LARGE SCALE GENOMIC DNA]</scope>
    <source>
        <strain>C57BL/6J</strain>
    </source>
</reference>
<reference key="3">
    <citation type="journal article" date="2011" name="PLoS ONE">
        <title>Fidgetin-like1 is a strong candidate for a dynamic impairment of male meiosis leading to reduced testis weight in mice.</title>
        <authorList>
            <person name="L'Hote D."/>
            <person name="Vatin M."/>
            <person name="Auer J."/>
            <person name="Castille J."/>
            <person name="Passet B."/>
            <person name="Montagutelli X."/>
            <person name="Serres C."/>
            <person name="Vaiman D."/>
        </authorList>
    </citation>
    <scope>TISSUE SPECIFICITY</scope>
    <scope>DEVELOPMENTAL STAGE</scope>
</reference>
<reference key="4">
    <citation type="journal article" date="2018" name="Andrologia">
        <title>Spermatogenesis-associated 48 is essential for spermatogenesis in mice.</title>
        <authorList>
            <person name="Zhang J."/>
            <person name="Yan R."/>
            <person name="Wu C."/>
            <person name="Wang H."/>
            <person name="Yang G."/>
            <person name="Zhong Y."/>
            <person name="Liu Y."/>
            <person name="Wan L."/>
            <person name="Tang A."/>
        </authorList>
    </citation>
    <scope>FUNCTION</scope>
    <scope>DISRUPTION PHENOTYPE</scope>
    <scope>TISSUE SPECIFICITY</scope>
    <scope>DEVELOPMENTAL STAGE</scope>
</reference>
<proteinExistence type="evidence at transcript level"/>
<feature type="chain" id="PRO_0000331496" description="Protein SPMIP7">
    <location>
        <begin position="1"/>
        <end position="441"/>
    </location>
</feature>
<feature type="splice variant" id="VSP_033234" description="In isoform 2." evidence="4">
    <location>
        <begin position="1"/>
        <end position="292"/>
    </location>
</feature>
<feature type="sequence conflict" description="In Ref. 1; BAB29723." evidence="7" ref="1">
    <original>M</original>
    <variation>V</variation>
    <location>
        <position position="407"/>
    </location>
</feature>
<gene>
    <name type="primary">Spmip7</name>
    <name evidence="5" type="synonym">Pms1</name>
    <name evidence="6" type="synonym">Spata48</name>
</gene>